<protein>
    <recommendedName>
        <fullName evidence="1">FMN-dependent NADH:quinone oxidoreductase 3</fullName>
        <ecNumber evidence="1">1.6.5.-</ecNumber>
    </recommendedName>
    <alternativeName>
        <fullName evidence="1">Azo-dye reductase 3</fullName>
    </alternativeName>
    <alternativeName>
        <fullName evidence="1">FMN-dependent NADH-azo compound oxidoreductase 3</fullName>
    </alternativeName>
    <alternativeName>
        <fullName evidence="1">FMN-dependent NADH-azoreductase 3</fullName>
        <ecNumber evidence="1">1.7.1.17</ecNumber>
    </alternativeName>
</protein>
<evidence type="ECO:0000255" key="1">
    <source>
        <dbReference type="HAMAP-Rule" id="MF_01216"/>
    </source>
</evidence>
<reference key="1">
    <citation type="journal article" date="2006" name="J. Bacteriol.">
        <title>Pathogenomic sequence analysis of Bacillus cereus and Bacillus thuringiensis isolates closely related to Bacillus anthracis.</title>
        <authorList>
            <person name="Han C.S."/>
            <person name="Xie G."/>
            <person name="Challacombe J.F."/>
            <person name="Altherr M.R."/>
            <person name="Bhotika S.S."/>
            <person name="Bruce D."/>
            <person name="Campbell C.S."/>
            <person name="Campbell M.L."/>
            <person name="Chen J."/>
            <person name="Chertkov O."/>
            <person name="Cleland C."/>
            <person name="Dimitrijevic M."/>
            <person name="Doggett N.A."/>
            <person name="Fawcett J.J."/>
            <person name="Glavina T."/>
            <person name="Goodwin L.A."/>
            <person name="Hill K.K."/>
            <person name="Hitchcock P."/>
            <person name="Jackson P.J."/>
            <person name="Keim P."/>
            <person name="Kewalramani A.R."/>
            <person name="Longmire J."/>
            <person name="Lucas S."/>
            <person name="Malfatti S."/>
            <person name="McMurry K."/>
            <person name="Meincke L.J."/>
            <person name="Misra M."/>
            <person name="Moseman B.L."/>
            <person name="Mundt M."/>
            <person name="Munk A.C."/>
            <person name="Okinaka R.T."/>
            <person name="Parson-Quintana B."/>
            <person name="Reilly L.P."/>
            <person name="Richardson P."/>
            <person name="Robinson D.L."/>
            <person name="Rubin E."/>
            <person name="Saunders E."/>
            <person name="Tapia R."/>
            <person name="Tesmer J.G."/>
            <person name="Thayer N."/>
            <person name="Thompson L.S."/>
            <person name="Tice H."/>
            <person name="Ticknor L.O."/>
            <person name="Wills P.L."/>
            <person name="Brettin T.S."/>
            <person name="Gilna P."/>
        </authorList>
    </citation>
    <scope>NUCLEOTIDE SEQUENCE [LARGE SCALE GENOMIC DNA]</scope>
    <source>
        <strain>ZK / E33L</strain>
    </source>
</reference>
<comment type="function">
    <text evidence="1">Quinone reductase that provides resistance to thiol-specific stress caused by electrophilic quinones.</text>
</comment>
<comment type="function">
    <text evidence="1">Also exhibits azoreductase activity. Catalyzes the reductive cleavage of the azo bond in aromatic azo compounds to the corresponding amines.</text>
</comment>
<comment type="catalytic activity">
    <reaction evidence="1">
        <text>2 a quinone + NADH + H(+) = 2 a 1,4-benzosemiquinone + NAD(+)</text>
        <dbReference type="Rhea" id="RHEA:65952"/>
        <dbReference type="ChEBI" id="CHEBI:15378"/>
        <dbReference type="ChEBI" id="CHEBI:57540"/>
        <dbReference type="ChEBI" id="CHEBI:57945"/>
        <dbReference type="ChEBI" id="CHEBI:132124"/>
        <dbReference type="ChEBI" id="CHEBI:134225"/>
    </reaction>
</comment>
<comment type="catalytic activity">
    <reaction evidence="1">
        <text>N,N-dimethyl-1,4-phenylenediamine + anthranilate + 2 NAD(+) = 2-(4-dimethylaminophenyl)diazenylbenzoate + 2 NADH + 2 H(+)</text>
        <dbReference type="Rhea" id="RHEA:55872"/>
        <dbReference type="ChEBI" id="CHEBI:15378"/>
        <dbReference type="ChEBI" id="CHEBI:15783"/>
        <dbReference type="ChEBI" id="CHEBI:16567"/>
        <dbReference type="ChEBI" id="CHEBI:57540"/>
        <dbReference type="ChEBI" id="CHEBI:57945"/>
        <dbReference type="ChEBI" id="CHEBI:71579"/>
        <dbReference type="EC" id="1.7.1.17"/>
    </reaction>
</comment>
<comment type="cofactor">
    <cofactor evidence="1">
        <name>FMN</name>
        <dbReference type="ChEBI" id="CHEBI:58210"/>
    </cofactor>
    <text evidence="1">Binds 1 FMN per subunit.</text>
</comment>
<comment type="subunit">
    <text evidence="1">Homodimer.</text>
</comment>
<comment type="similarity">
    <text evidence="1">Belongs to the azoreductase type 1 family.</text>
</comment>
<organism>
    <name type="scientific">Bacillus cereus (strain ZK / E33L)</name>
    <dbReference type="NCBI Taxonomy" id="288681"/>
    <lineage>
        <taxon>Bacteria</taxon>
        <taxon>Bacillati</taxon>
        <taxon>Bacillota</taxon>
        <taxon>Bacilli</taxon>
        <taxon>Bacillales</taxon>
        <taxon>Bacillaceae</taxon>
        <taxon>Bacillus</taxon>
        <taxon>Bacillus cereus group</taxon>
    </lineage>
</organism>
<sequence length="211" mass="22933">MTKVLFITANPNSAEGSFGMAVGEAFIEAYKNEHPQDEVVTIDLFNTTVPAIDADVFAAWGKFAAGEGFETLTEAQQQKVAAMNTNLETFMNADRYVFVTPMWNFSYPPVVKAYLDNVAIAGKTFKYTENGPVGLLEGKKALHIQATGGVYSEGAYAAVDFGRNHLKTVLGFVGVNDTEYIAVEGMNANPEKAQEIKEAAIANARELAKRF</sequence>
<feature type="chain" id="PRO_0000245886" description="FMN-dependent NADH:quinone oxidoreductase 3">
    <location>
        <begin position="1"/>
        <end position="211"/>
    </location>
</feature>
<feature type="binding site" evidence="1">
    <location>
        <begin position="102"/>
        <end position="105"/>
    </location>
    <ligand>
        <name>FMN</name>
        <dbReference type="ChEBI" id="CHEBI:58210"/>
    </ligand>
</feature>
<name>AZOR3_BACCZ</name>
<dbReference type="EC" id="1.6.5.-" evidence="1"/>
<dbReference type="EC" id="1.7.1.17" evidence="1"/>
<dbReference type="EMBL" id="CP000001">
    <property type="protein sequence ID" value="AAU18233.1"/>
    <property type="molecule type" value="Genomic_DNA"/>
</dbReference>
<dbReference type="RefSeq" id="WP_000170029.1">
    <property type="nucleotide sequence ID" value="NZ_CP009968.1"/>
</dbReference>
<dbReference type="SMR" id="Q63BV2"/>
<dbReference type="KEGG" id="bcz:BCE33L2023"/>
<dbReference type="PATRIC" id="fig|288681.22.peg.3501"/>
<dbReference type="Proteomes" id="UP000002612">
    <property type="component" value="Chromosome"/>
</dbReference>
<dbReference type="GO" id="GO:0009055">
    <property type="term" value="F:electron transfer activity"/>
    <property type="evidence" value="ECO:0007669"/>
    <property type="project" value="UniProtKB-UniRule"/>
</dbReference>
<dbReference type="GO" id="GO:0010181">
    <property type="term" value="F:FMN binding"/>
    <property type="evidence" value="ECO:0007669"/>
    <property type="project" value="UniProtKB-UniRule"/>
</dbReference>
<dbReference type="GO" id="GO:0016652">
    <property type="term" value="F:oxidoreductase activity, acting on NAD(P)H as acceptor"/>
    <property type="evidence" value="ECO:0007669"/>
    <property type="project" value="UniProtKB-UniRule"/>
</dbReference>
<dbReference type="GO" id="GO:0016655">
    <property type="term" value="F:oxidoreductase activity, acting on NAD(P)H, quinone or similar compound as acceptor"/>
    <property type="evidence" value="ECO:0007669"/>
    <property type="project" value="InterPro"/>
</dbReference>
<dbReference type="Gene3D" id="3.40.50.360">
    <property type="match status" value="1"/>
</dbReference>
<dbReference type="HAMAP" id="MF_01216">
    <property type="entry name" value="Azoreductase_type1"/>
    <property type="match status" value="1"/>
</dbReference>
<dbReference type="InterPro" id="IPR003680">
    <property type="entry name" value="Flavodoxin_fold"/>
</dbReference>
<dbReference type="InterPro" id="IPR029039">
    <property type="entry name" value="Flavoprotein-like_sf"/>
</dbReference>
<dbReference type="InterPro" id="IPR050104">
    <property type="entry name" value="FMN-dep_NADH:Q_OxRdtase_AzoR1"/>
</dbReference>
<dbReference type="InterPro" id="IPR023048">
    <property type="entry name" value="NADH:quinone_OxRdtase_FMN_depd"/>
</dbReference>
<dbReference type="NCBIfam" id="NF010075">
    <property type="entry name" value="PRK13556.1"/>
    <property type="match status" value="1"/>
</dbReference>
<dbReference type="PANTHER" id="PTHR43741">
    <property type="entry name" value="FMN-DEPENDENT NADH-AZOREDUCTASE 1"/>
    <property type="match status" value="1"/>
</dbReference>
<dbReference type="PANTHER" id="PTHR43741:SF7">
    <property type="entry name" value="FMN-DEPENDENT NADH:QUINONE OXIDOREDUCTASE"/>
    <property type="match status" value="1"/>
</dbReference>
<dbReference type="Pfam" id="PF02525">
    <property type="entry name" value="Flavodoxin_2"/>
    <property type="match status" value="1"/>
</dbReference>
<dbReference type="SUPFAM" id="SSF52218">
    <property type="entry name" value="Flavoproteins"/>
    <property type="match status" value="1"/>
</dbReference>
<accession>Q63BV2</accession>
<proteinExistence type="inferred from homology"/>
<gene>
    <name evidence="1" type="primary">azoR3</name>
    <name type="ordered locus">BCE33L2023</name>
</gene>
<keyword id="KW-0285">Flavoprotein</keyword>
<keyword id="KW-0288">FMN</keyword>
<keyword id="KW-0520">NAD</keyword>
<keyword id="KW-0560">Oxidoreductase</keyword>